<name>RRP4_THEAM</name>
<reference key="1">
    <citation type="journal article" date="2010" name="Stand. Genomic Sci.">
        <title>Complete genome sequence of Thermosphaera aggregans type strain (M11TLT).</title>
        <authorList>
            <person name="Spring S."/>
            <person name="Rachel R."/>
            <person name="Lapidus A."/>
            <person name="Davenport K."/>
            <person name="Tice H."/>
            <person name="Copeland A."/>
            <person name="Cheng J.-F."/>
            <person name="Lucas S."/>
            <person name="Chen F."/>
            <person name="Nolan M."/>
            <person name="Bruce D."/>
            <person name="Goodwin L."/>
            <person name="Pitluck S."/>
            <person name="Ivanova N."/>
            <person name="Mavromatis K."/>
            <person name="Ovchinnikova G."/>
            <person name="Pati A."/>
            <person name="Chen A."/>
            <person name="Palaniappan K."/>
            <person name="Land M."/>
            <person name="Hauser L."/>
            <person name="Chang Y.-J."/>
            <person name="Jeffries C.C."/>
            <person name="Brettin T."/>
            <person name="Detter J.C."/>
            <person name="Tapia R."/>
            <person name="Han C."/>
            <person name="Heimerl T."/>
            <person name="Weikl F."/>
            <person name="Brambilla E."/>
            <person name="Goker M."/>
            <person name="Bristow J."/>
            <person name="Eisen J.A."/>
            <person name="Markowitz V."/>
            <person name="Hugenholtz P."/>
            <person name="Kyrpides N.C."/>
            <person name="Klenk H.-P."/>
        </authorList>
    </citation>
    <scope>NUCLEOTIDE SEQUENCE [LARGE SCALE GENOMIC DNA]</scope>
    <source>
        <strain>DSM 11486 / M11TL</strain>
    </source>
</reference>
<accession>D5U396</accession>
<evidence type="ECO:0000255" key="1">
    <source>
        <dbReference type="HAMAP-Rule" id="MF_00623"/>
    </source>
</evidence>
<gene>
    <name evidence="1" type="primary">rrp4</name>
    <name type="ordered locus">Tagg_1335</name>
</gene>
<sequence length="247" mass="27309">MKLKVIVADRQLVRPGDILAYIEEAGEVVKFKKIPDKHVYIFDNKIISDLVGVVNVSGEDIQVIPLEGVYIPRKDDLVIGIVENVGVTAWTLDIRSPYPGVLNASEVIEGFNPLIHNLRNYLDTGDFVIGRIALFDRTRDPVITVKGKGLGKITEGVVVDVKPSKIPRLIGKRGSMYNLLTSMSGCEITIAQNGFVWLKCHDENRAKVLIQAIKLIELKAHMRGLTEEVKMFLERKLGGGGSGEHQA</sequence>
<feature type="chain" id="PRO_0000416237" description="Exosome complex component Rrp4">
    <location>
        <begin position="1"/>
        <end position="247"/>
    </location>
</feature>
<feature type="domain" description="S1 motif" evidence="1">
    <location>
        <begin position="75"/>
        <end position="148"/>
    </location>
</feature>
<feature type="domain" description="KH" evidence="1">
    <location>
        <begin position="154"/>
        <end position="220"/>
    </location>
</feature>
<organism>
    <name type="scientific">Thermosphaera aggregans (strain DSM 11486 / M11TL)</name>
    <dbReference type="NCBI Taxonomy" id="633148"/>
    <lineage>
        <taxon>Archaea</taxon>
        <taxon>Thermoproteota</taxon>
        <taxon>Thermoprotei</taxon>
        <taxon>Desulfurococcales</taxon>
        <taxon>Desulfurococcaceae</taxon>
        <taxon>Thermosphaera</taxon>
    </lineage>
</organism>
<keyword id="KW-0963">Cytoplasm</keyword>
<keyword id="KW-0271">Exosome</keyword>
<keyword id="KW-1185">Reference proteome</keyword>
<keyword id="KW-0694">RNA-binding</keyword>
<dbReference type="EMBL" id="CP001939">
    <property type="protein sequence ID" value="ADG91596.1"/>
    <property type="molecule type" value="Genomic_DNA"/>
</dbReference>
<dbReference type="RefSeq" id="WP_013130189.1">
    <property type="nucleotide sequence ID" value="NC_014160.1"/>
</dbReference>
<dbReference type="SMR" id="D5U396"/>
<dbReference type="STRING" id="633148.Tagg_1335"/>
<dbReference type="GeneID" id="9166383"/>
<dbReference type="KEGG" id="tag:Tagg_1335"/>
<dbReference type="eggNOG" id="arCOG00678">
    <property type="taxonomic scope" value="Archaea"/>
</dbReference>
<dbReference type="HOGENOM" id="CLU_071769_0_0_2"/>
<dbReference type="OrthoDB" id="35160at2157"/>
<dbReference type="Proteomes" id="UP000002376">
    <property type="component" value="Chromosome"/>
</dbReference>
<dbReference type="GO" id="GO:0005737">
    <property type="term" value="C:cytoplasm"/>
    <property type="evidence" value="ECO:0007669"/>
    <property type="project" value="UniProtKB-SubCell"/>
</dbReference>
<dbReference type="GO" id="GO:0000178">
    <property type="term" value="C:exosome (RNase complex)"/>
    <property type="evidence" value="ECO:0007669"/>
    <property type="project" value="UniProtKB-KW"/>
</dbReference>
<dbReference type="GO" id="GO:0008143">
    <property type="term" value="F:poly(A) binding"/>
    <property type="evidence" value="ECO:0007669"/>
    <property type="project" value="InterPro"/>
</dbReference>
<dbReference type="GO" id="GO:0071034">
    <property type="term" value="P:CUT catabolic process"/>
    <property type="evidence" value="ECO:0007669"/>
    <property type="project" value="TreeGrafter"/>
</dbReference>
<dbReference type="GO" id="GO:0000467">
    <property type="term" value="P:exonucleolytic trimming to generate mature 3'-end of 5.8S rRNA from tricistronic rRNA transcript (SSU-rRNA, 5.8S rRNA, LSU-rRNA)"/>
    <property type="evidence" value="ECO:0007669"/>
    <property type="project" value="TreeGrafter"/>
</dbReference>
<dbReference type="GO" id="GO:0071051">
    <property type="term" value="P:poly(A)-dependent snoRNA 3'-end processing"/>
    <property type="evidence" value="ECO:0007669"/>
    <property type="project" value="TreeGrafter"/>
</dbReference>
<dbReference type="GO" id="GO:0006401">
    <property type="term" value="P:RNA catabolic process"/>
    <property type="evidence" value="ECO:0007669"/>
    <property type="project" value="UniProtKB-UniRule"/>
</dbReference>
<dbReference type="GO" id="GO:0034475">
    <property type="term" value="P:U4 snRNA 3'-end processing"/>
    <property type="evidence" value="ECO:0007669"/>
    <property type="project" value="TreeGrafter"/>
</dbReference>
<dbReference type="CDD" id="cd22524">
    <property type="entry name" value="KH-I_Rrp4_prokar"/>
    <property type="match status" value="1"/>
</dbReference>
<dbReference type="CDD" id="cd05789">
    <property type="entry name" value="S1_Rrp4"/>
    <property type="match status" value="1"/>
</dbReference>
<dbReference type="Gene3D" id="2.40.50.100">
    <property type="match status" value="1"/>
</dbReference>
<dbReference type="Gene3D" id="3.30.1370.10">
    <property type="entry name" value="K Homology domain, type 1"/>
    <property type="match status" value="1"/>
</dbReference>
<dbReference type="Gene3D" id="2.40.50.140">
    <property type="entry name" value="Nucleic acid-binding proteins"/>
    <property type="match status" value="1"/>
</dbReference>
<dbReference type="HAMAP" id="MF_00623">
    <property type="entry name" value="Exosome_Rrp4"/>
    <property type="match status" value="1"/>
</dbReference>
<dbReference type="InterPro" id="IPR026699">
    <property type="entry name" value="Exosome_RNA_bind1/RRP40/RRP4"/>
</dbReference>
<dbReference type="InterPro" id="IPR004087">
    <property type="entry name" value="KH_dom"/>
</dbReference>
<dbReference type="InterPro" id="IPR004088">
    <property type="entry name" value="KH_dom_type_1"/>
</dbReference>
<dbReference type="InterPro" id="IPR036612">
    <property type="entry name" value="KH_dom_type_1_sf"/>
</dbReference>
<dbReference type="InterPro" id="IPR012340">
    <property type="entry name" value="NA-bd_OB-fold"/>
</dbReference>
<dbReference type="InterPro" id="IPR023474">
    <property type="entry name" value="Rrp4"/>
</dbReference>
<dbReference type="InterPro" id="IPR048565">
    <property type="entry name" value="RRP4_S1"/>
</dbReference>
<dbReference type="NCBIfam" id="NF003181">
    <property type="entry name" value="PRK04163.1-1"/>
    <property type="match status" value="1"/>
</dbReference>
<dbReference type="PANTHER" id="PTHR21321:SF4">
    <property type="entry name" value="EXOSOME COMPLEX COMPONENT RRP4"/>
    <property type="match status" value="1"/>
</dbReference>
<dbReference type="PANTHER" id="PTHR21321">
    <property type="entry name" value="PNAS-3 RELATED"/>
    <property type="match status" value="1"/>
</dbReference>
<dbReference type="Pfam" id="PF15985">
    <property type="entry name" value="KH_6"/>
    <property type="match status" value="1"/>
</dbReference>
<dbReference type="SMART" id="SM00322">
    <property type="entry name" value="KH"/>
    <property type="match status" value="1"/>
</dbReference>
<dbReference type="SUPFAM" id="SSF54791">
    <property type="entry name" value="Eukaryotic type KH-domain (KH-domain type I)"/>
    <property type="match status" value="1"/>
</dbReference>
<dbReference type="SUPFAM" id="SSF50249">
    <property type="entry name" value="Nucleic acid-binding proteins"/>
    <property type="match status" value="1"/>
</dbReference>
<dbReference type="SUPFAM" id="SSF110324">
    <property type="entry name" value="Ribosomal L27 protein-like"/>
    <property type="match status" value="1"/>
</dbReference>
<protein>
    <recommendedName>
        <fullName evidence="1">Exosome complex component Rrp4</fullName>
    </recommendedName>
</protein>
<proteinExistence type="inferred from homology"/>
<comment type="function">
    <text evidence="1">Non-catalytic component of the exosome, which is a complex involved in RNA degradation. Increases the RNA binding and the efficiency of RNA degradation. Confers strong poly(A) specificity to the exosome.</text>
</comment>
<comment type="subunit">
    <text evidence="1">Component of the archaeal exosome complex. Forms a trimer of Rrp4 and/or Csl4 subunits. The trimer associates with a hexameric ring-like arrangement composed of 3 Rrp41-Rrp42 heterodimers.</text>
</comment>
<comment type="subcellular location">
    <subcellularLocation>
        <location evidence="1">Cytoplasm</location>
    </subcellularLocation>
</comment>
<comment type="similarity">
    <text evidence="1">Belongs to the RRP4 family.</text>
</comment>